<protein>
    <recommendedName>
        <fullName evidence="6">Delta-stichotoxin-Hmg4a</fullName>
        <shortName evidence="6">Delta-SHTX-Hmg4a</shortName>
    </recommendedName>
    <alternativeName>
        <fullName evidence="3">Delta-stichotoxin-Rpa1a</fullName>
        <shortName evidence="3">Delta-SHTX-Rpa1a</shortName>
    </alternativeName>
    <alternativeName>
        <fullName evidence="4">RpII</fullName>
    </alternativeName>
    <alternativeName>
        <fullName evidence="5">Toxin II</fullName>
    </alternativeName>
</protein>
<organism>
    <name type="scientific">Heteractis magnifica</name>
    <name type="common">Magnificent sea anemone</name>
    <name type="synonym">Radianthus magnifica</name>
    <dbReference type="NCBI Taxonomy" id="38281"/>
    <lineage>
        <taxon>Eukaryota</taxon>
        <taxon>Metazoa</taxon>
        <taxon>Cnidaria</taxon>
        <taxon>Anthozoa</taxon>
        <taxon>Hexacorallia</taxon>
        <taxon>Actiniaria</taxon>
        <taxon>Stichodactylidae</taxon>
        <taxon>Heteractis</taxon>
    </lineage>
</organism>
<name>4AD_HETMG</name>
<sequence length="48" mass="5295">ASCKCDDDGPDVRSATFTGTVDFWNCNEGWEKCTAVYTPVASCCRKKK</sequence>
<dbReference type="PIR" id="A90510">
    <property type="entry name" value="TZAZR2"/>
</dbReference>
<dbReference type="BMRB" id="P01534"/>
<dbReference type="SMR" id="P01534"/>
<dbReference type="GO" id="GO:0005576">
    <property type="term" value="C:extracellular region"/>
    <property type="evidence" value="ECO:0007669"/>
    <property type="project" value="UniProtKB-SubCell"/>
</dbReference>
<dbReference type="GO" id="GO:0042151">
    <property type="term" value="C:nematocyst"/>
    <property type="evidence" value="ECO:0007669"/>
    <property type="project" value="UniProtKB-SubCell"/>
</dbReference>
<dbReference type="GO" id="GO:0017080">
    <property type="term" value="F:sodium channel regulator activity"/>
    <property type="evidence" value="ECO:0007669"/>
    <property type="project" value="UniProtKB-KW"/>
</dbReference>
<dbReference type="GO" id="GO:0090729">
    <property type="term" value="F:toxin activity"/>
    <property type="evidence" value="ECO:0007669"/>
    <property type="project" value="UniProtKB-KW"/>
</dbReference>
<dbReference type="GO" id="GO:0009966">
    <property type="term" value="P:regulation of signal transduction"/>
    <property type="evidence" value="ECO:0007669"/>
    <property type="project" value="InterPro"/>
</dbReference>
<dbReference type="Gene3D" id="2.20.20.10">
    <property type="entry name" value="Anthopleurin-A"/>
    <property type="match status" value="1"/>
</dbReference>
<dbReference type="InterPro" id="IPR000693">
    <property type="entry name" value="Anenome_toxin"/>
</dbReference>
<dbReference type="InterPro" id="IPR023355">
    <property type="entry name" value="Myo_ane_neurotoxin_sf"/>
</dbReference>
<dbReference type="Pfam" id="PF00706">
    <property type="entry name" value="Toxin_4"/>
    <property type="match status" value="1"/>
</dbReference>
<dbReference type="PIRSF" id="PIRSF001905">
    <property type="entry name" value="Anenome_toxin"/>
    <property type="match status" value="1"/>
</dbReference>
<dbReference type="SUPFAM" id="SSF57392">
    <property type="entry name" value="Defensin-like"/>
    <property type="match status" value="1"/>
</dbReference>
<reference key="1">
    <citation type="journal article" date="1985" name="Biochemistry">
        <title>Purification, sequence, and pharmacological properties of sea anemone toxins from Radianthus paumotensis. A new class of sea anemone toxins acting on the sodium channel.</title>
        <authorList>
            <person name="Schweitz H."/>
            <person name="Bidard J.-N."/>
            <person name="Frelin C."/>
            <person name="Pauron D."/>
            <person name="Vijverberg H.P.M."/>
            <person name="Mahasneh D.M."/>
            <person name="Lazdunski M."/>
            <person name="Vilbois F."/>
            <person name="Tsugita A."/>
        </authorList>
    </citation>
    <scope>PROTEIN SEQUENCE</scope>
    <scope>SUBCELLULAR LOCATION</scope>
    <scope>FUNCTION</scope>
    <scope>TOXIC DOSE</scope>
    <source>
        <tissue>Nematoblast</tissue>
    </source>
</reference>
<reference key="2">
    <citation type="journal article" date="1986" name="Biochemistry">
        <title>NMR analysis and sequence of toxin II from the sea anemone Radianthus paumotensis.</title>
        <authorList>
            <person name="Wemmer D.E."/>
            <person name="Kumar N.V."/>
            <person name="Metrione R.M."/>
            <person name="Lazdunski M."/>
            <person name="Drobny G."/>
            <person name="Kallenbach N.R."/>
        </authorList>
    </citation>
    <scope>PROTEIN SEQUENCE</scope>
    <scope>SUBCELLULAR LOCATION</scope>
    <scope>STRUCTURE BY NMR</scope>
    <scope>DISULFIDE BONDS</scope>
    <source>
        <tissue>Nematoblast</tissue>
    </source>
</reference>
<reference key="3">
    <citation type="journal article" date="2012" name="Toxicon">
        <title>Development of a rational nomenclature for naming peptide and protein toxins from sea anemones.</title>
        <authorList>
            <person name="Oliveira J.S."/>
            <person name="Fuentes-Silva D."/>
            <person name="King G.F."/>
        </authorList>
    </citation>
    <scope>NOMENCLATURE</scope>
</reference>
<comment type="function">
    <text evidence="1">Binds specifically to voltage-gated sodium channels (Nav), thereby delaying their inactivation during signal transduction (PubMed:2412579). Its toxicity is weaker than that of RpIII (AC P08380) (PubMed:2412579).</text>
</comment>
<comment type="subcellular location">
    <subcellularLocation>
        <location evidence="1 2">Secreted</location>
    </subcellularLocation>
    <subcellularLocation>
        <location>Nematocyst</location>
    </subcellularLocation>
</comment>
<comment type="toxic dose">
    <text evidence="1">LD(50) is 4.2 mg/kg when intraperitoneally injected into mice.</text>
</comment>
<comment type="toxic dose">
    <text evidence="1">LD(50) is 12 ug/kg when intracutaneously injected into mice.</text>
</comment>
<comment type="toxic dose">
    <text evidence="1">LD(50) is 15 ug/kg when on crabs.</text>
</comment>
<comment type="miscellaneous">
    <text evidence="6">A synonymy between H.magnifica and R.crispa is controversial.</text>
</comment>
<comment type="similarity">
    <text evidence="6">Belongs to the sea anemone sodium channel inhibitory toxin family. Type II subfamily.</text>
</comment>
<comment type="sequence caution" evidence="6">
    <conflict type="miscellaneous discrepancy" ref="1"/>
    <text>Identical with that shown for positions 1-23 and differs considerably thereafter.</text>
</comment>
<accession>P01534</accession>
<proteinExistence type="evidence at protein level"/>
<feature type="chain" id="PRO_0000221527" description="Delta-stichotoxin-Hmg4a" evidence="1 2">
    <location>
        <begin position="1"/>
        <end position="48"/>
    </location>
</feature>
<feature type="disulfide bond" evidence="2">
    <location>
        <begin position="3"/>
        <end position="43"/>
    </location>
</feature>
<feature type="disulfide bond" evidence="2">
    <location>
        <begin position="5"/>
        <end position="33"/>
    </location>
</feature>
<feature type="disulfide bond" evidence="2">
    <location>
        <begin position="26"/>
        <end position="44"/>
    </location>
</feature>
<keyword id="KW-0903">Direct protein sequencing</keyword>
<keyword id="KW-1015">Disulfide bond</keyword>
<keyword id="KW-0872">Ion channel impairing toxin</keyword>
<keyword id="KW-0166">Nematocyst</keyword>
<keyword id="KW-0528">Neurotoxin</keyword>
<keyword id="KW-0964">Secreted</keyword>
<keyword id="KW-0800">Toxin</keyword>
<keyword id="KW-0738">Voltage-gated sodium channel impairing toxin</keyword>
<evidence type="ECO:0000269" key="1">
    <source>
    </source>
</evidence>
<evidence type="ECO:0000269" key="2">
    <source>
    </source>
</evidence>
<evidence type="ECO:0000303" key="3">
    <source>
    </source>
</evidence>
<evidence type="ECO:0000303" key="4">
    <source>
    </source>
</evidence>
<evidence type="ECO:0000303" key="5">
    <source>
    </source>
</evidence>
<evidence type="ECO:0000305" key="6"/>